<gene>
    <name type="primary">ksh1</name>
    <name type="synonym">new21</name>
    <name type="ORF">SPBC530.16</name>
</gene>
<proteinExistence type="evidence at transcript level"/>
<feature type="signal peptide" evidence="2">
    <location>
        <begin position="1"/>
        <end position="21"/>
    </location>
</feature>
<feature type="chain" id="PRO_0000416500" description="Protein kish">
    <location>
        <begin position="22"/>
        <end position="73"/>
    </location>
</feature>
<feature type="topological domain" description="Lumenal" evidence="2">
    <location>
        <begin position="22"/>
        <end position="52"/>
    </location>
</feature>
<feature type="transmembrane region" description="Helical" evidence="2">
    <location>
        <begin position="53"/>
        <end position="73"/>
    </location>
</feature>
<dbReference type="EMBL" id="CU329671">
    <property type="protein sequence ID" value="CCD31354.1"/>
    <property type="molecule type" value="Genomic_DNA"/>
</dbReference>
<dbReference type="RefSeq" id="XP_004001700.1">
    <property type="nucleotide sequence ID" value="XM_004001651.1"/>
</dbReference>
<dbReference type="BioGRID" id="4253866">
    <property type="interactions" value="3"/>
</dbReference>
<dbReference type="FunCoup" id="G2TRS3">
    <property type="interactions" value="209"/>
</dbReference>
<dbReference type="STRING" id="284812.G2TRS3"/>
<dbReference type="PaxDb" id="4896-SPBC530.16.1"/>
<dbReference type="EnsemblFungi" id="SPBC530.16.1">
    <property type="protein sequence ID" value="SPBC530.16.1:pep"/>
    <property type="gene ID" value="SPBC530.16"/>
</dbReference>
<dbReference type="PomBase" id="SPBC530.16">
    <property type="gene designation" value="ksh1"/>
</dbReference>
<dbReference type="VEuPathDB" id="FungiDB:SPBC530.16"/>
<dbReference type="eggNOG" id="KOG3808">
    <property type="taxonomic scope" value="Eukaryota"/>
</dbReference>
<dbReference type="HOGENOM" id="CLU_152663_1_1_1"/>
<dbReference type="InParanoid" id="G2TRS3"/>
<dbReference type="OMA" id="KVGFQGT"/>
<dbReference type="PRO" id="PR:G2TRS3"/>
<dbReference type="Proteomes" id="UP000002485">
    <property type="component" value="Chromosome II"/>
</dbReference>
<dbReference type="GO" id="GO:0005789">
    <property type="term" value="C:endoplasmic reticulum membrane"/>
    <property type="evidence" value="ECO:0007669"/>
    <property type="project" value="UniProtKB-SubCell"/>
</dbReference>
<dbReference type="GO" id="GO:0000139">
    <property type="term" value="C:Golgi membrane"/>
    <property type="evidence" value="ECO:0000250"/>
    <property type="project" value="PomBase"/>
</dbReference>
<dbReference type="GO" id="GO:0046907">
    <property type="term" value="P:intracellular transport"/>
    <property type="evidence" value="ECO:0000318"/>
    <property type="project" value="GO_Central"/>
</dbReference>
<dbReference type="GO" id="GO:0009306">
    <property type="term" value="P:protein secretion"/>
    <property type="evidence" value="ECO:0000318"/>
    <property type="project" value="GO_Central"/>
</dbReference>
<dbReference type="GO" id="GO:0016192">
    <property type="term" value="P:vesicle-mediated transport"/>
    <property type="evidence" value="ECO:0000266"/>
    <property type="project" value="PomBase"/>
</dbReference>
<dbReference type="InterPro" id="IPR051523">
    <property type="entry name" value="KISH_domain"/>
</dbReference>
<dbReference type="InterPro" id="IPR009653">
    <property type="entry name" value="Ksh1"/>
</dbReference>
<dbReference type="PANTHER" id="PTHR13229">
    <property type="entry name" value="PROTEIN KISH-A"/>
    <property type="match status" value="1"/>
</dbReference>
<dbReference type="Pfam" id="PF06842">
    <property type="entry name" value="DUF1242"/>
    <property type="match status" value="1"/>
</dbReference>
<keyword id="KW-0256">Endoplasmic reticulum</keyword>
<keyword id="KW-0333">Golgi apparatus</keyword>
<keyword id="KW-0472">Membrane</keyword>
<keyword id="KW-1185">Reference proteome</keyword>
<keyword id="KW-0732">Signal</keyword>
<keyword id="KW-0812">Transmembrane</keyword>
<keyword id="KW-1133">Transmembrane helix</keyword>
<evidence type="ECO:0000250" key="1"/>
<evidence type="ECO:0000255" key="2"/>
<evidence type="ECO:0000269" key="3">
    <source>
    </source>
</evidence>
<evidence type="ECO:0000305" key="4"/>
<sequence length="73" mass="8478">MTAIFNFESLLFVILLTICTCTYLHRQFPALLEKRKEGVTMVFWKCARIGERASPYISLFCVFMALRFIFGSS</sequence>
<reference key="1">
    <citation type="journal article" date="2002" name="Nature">
        <title>The genome sequence of Schizosaccharomyces pombe.</title>
        <authorList>
            <person name="Wood V."/>
            <person name="Gwilliam R."/>
            <person name="Rajandream M.A."/>
            <person name="Lyne M.H."/>
            <person name="Lyne R."/>
            <person name="Stewart A."/>
            <person name="Sgouros J.G."/>
            <person name="Peat N."/>
            <person name="Hayles J."/>
            <person name="Baker S.G."/>
            <person name="Basham D."/>
            <person name="Bowman S."/>
            <person name="Brooks K."/>
            <person name="Brown D."/>
            <person name="Brown S."/>
            <person name="Chillingworth T."/>
            <person name="Churcher C.M."/>
            <person name="Collins M."/>
            <person name="Connor R."/>
            <person name="Cronin A."/>
            <person name="Davis P."/>
            <person name="Feltwell T."/>
            <person name="Fraser A."/>
            <person name="Gentles S."/>
            <person name="Goble A."/>
            <person name="Hamlin N."/>
            <person name="Harris D.E."/>
            <person name="Hidalgo J."/>
            <person name="Hodgson G."/>
            <person name="Holroyd S."/>
            <person name="Hornsby T."/>
            <person name="Howarth S."/>
            <person name="Huckle E.J."/>
            <person name="Hunt S."/>
            <person name="Jagels K."/>
            <person name="James K.D."/>
            <person name="Jones L."/>
            <person name="Jones M."/>
            <person name="Leather S."/>
            <person name="McDonald S."/>
            <person name="McLean J."/>
            <person name="Mooney P."/>
            <person name="Moule S."/>
            <person name="Mungall K.L."/>
            <person name="Murphy L.D."/>
            <person name="Niblett D."/>
            <person name="Odell C."/>
            <person name="Oliver K."/>
            <person name="O'Neil S."/>
            <person name="Pearson D."/>
            <person name="Quail M.A."/>
            <person name="Rabbinowitsch E."/>
            <person name="Rutherford K.M."/>
            <person name="Rutter S."/>
            <person name="Saunders D."/>
            <person name="Seeger K."/>
            <person name="Sharp S."/>
            <person name="Skelton J."/>
            <person name="Simmonds M.N."/>
            <person name="Squares R."/>
            <person name="Squares S."/>
            <person name="Stevens K."/>
            <person name="Taylor K."/>
            <person name="Taylor R.G."/>
            <person name="Tivey A."/>
            <person name="Walsh S.V."/>
            <person name="Warren T."/>
            <person name="Whitehead S."/>
            <person name="Woodward J.R."/>
            <person name="Volckaert G."/>
            <person name="Aert R."/>
            <person name="Robben J."/>
            <person name="Grymonprez B."/>
            <person name="Weltjens I."/>
            <person name="Vanstreels E."/>
            <person name="Rieger M."/>
            <person name="Schaefer M."/>
            <person name="Mueller-Auer S."/>
            <person name="Gabel C."/>
            <person name="Fuchs M."/>
            <person name="Duesterhoeft A."/>
            <person name="Fritzc C."/>
            <person name="Holzer E."/>
            <person name="Moestl D."/>
            <person name="Hilbert H."/>
            <person name="Borzym K."/>
            <person name="Langer I."/>
            <person name="Beck A."/>
            <person name="Lehrach H."/>
            <person name="Reinhardt R."/>
            <person name="Pohl T.M."/>
            <person name="Eger P."/>
            <person name="Zimmermann W."/>
            <person name="Wedler H."/>
            <person name="Wambutt R."/>
            <person name="Purnelle B."/>
            <person name="Goffeau A."/>
            <person name="Cadieu E."/>
            <person name="Dreano S."/>
            <person name="Gloux S."/>
            <person name="Lelaure V."/>
            <person name="Mottier S."/>
            <person name="Galibert F."/>
            <person name="Aves S.J."/>
            <person name="Xiang Z."/>
            <person name="Hunt C."/>
            <person name="Moore K."/>
            <person name="Hurst S.M."/>
            <person name="Lucas M."/>
            <person name="Rochet M."/>
            <person name="Gaillardin C."/>
            <person name="Tallada V.A."/>
            <person name="Garzon A."/>
            <person name="Thode G."/>
            <person name="Daga R.R."/>
            <person name="Cruzado L."/>
            <person name="Jimenez J."/>
            <person name="Sanchez M."/>
            <person name="del Rey F."/>
            <person name="Benito J."/>
            <person name="Dominguez A."/>
            <person name="Revuelta J.L."/>
            <person name="Moreno S."/>
            <person name="Armstrong J."/>
            <person name="Forsburg S.L."/>
            <person name="Cerutti L."/>
            <person name="Lowe T."/>
            <person name="McCombie W.R."/>
            <person name="Paulsen I."/>
            <person name="Potashkin J."/>
            <person name="Shpakovski G.V."/>
            <person name="Ussery D."/>
            <person name="Barrell B.G."/>
            <person name="Nurse P."/>
        </authorList>
    </citation>
    <scope>NUCLEOTIDE SEQUENCE [LARGE SCALE GENOMIC DNA]</scope>
    <source>
        <strain>972 / ATCC 24843</strain>
    </source>
</reference>
<reference key="2">
    <citation type="journal article" date="2011" name="Science">
        <title>Comparative functional genomics of the fission yeasts.</title>
        <authorList>
            <person name="Rhind N."/>
            <person name="Chen Z."/>
            <person name="Yassour M."/>
            <person name="Thompson D.A."/>
            <person name="Haas B.J."/>
            <person name="Habib N."/>
            <person name="Wapinski I."/>
            <person name="Roy S."/>
            <person name="Lin M.F."/>
            <person name="Heiman D.I."/>
            <person name="Young S.K."/>
            <person name="Furuya K."/>
            <person name="Guo Y."/>
            <person name="Pidoux A."/>
            <person name="Chen H.M."/>
            <person name="Robbertse B."/>
            <person name="Goldberg J.M."/>
            <person name="Aoki K."/>
            <person name="Bayne E.H."/>
            <person name="Berlin A.M."/>
            <person name="Desjardins C.A."/>
            <person name="Dobbs E."/>
            <person name="Dukaj L."/>
            <person name="Fan L."/>
            <person name="FitzGerald M.G."/>
            <person name="French C."/>
            <person name="Gujja S."/>
            <person name="Hansen K."/>
            <person name="Keifenheim D."/>
            <person name="Levin J.Z."/>
            <person name="Mosher R.A."/>
            <person name="Mueller C.A."/>
            <person name="Pfiffner J."/>
            <person name="Priest M."/>
            <person name="Russ C."/>
            <person name="Smialowska A."/>
            <person name="Swoboda P."/>
            <person name="Sykes S.M."/>
            <person name="Vaughn M."/>
            <person name="Vengrova S."/>
            <person name="Yoder R."/>
            <person name="Zeng Q."/>
            <person name="Allshire R."/>
            <person name="Baulcombe D."/>
            <person name="Birren B.W."/>
            <person name="Brown W."/>
            <person name="Ekwall K."/>
            <person name="Kellis M."/>
            <person name="Leatherwood J."/>
            <person name="Levin H."/>
            <person name="Margalit H."/>
            <person name="Martienssen R."/>
            <person name="Nieduszynski C.A."/>
            <person name="Spatafora J.W."/>
            <person name="Friedman N."/>
            <person name="Dalgaard J.Z."/>
            <person name="Baumann P."/>
            <person name="Niki H."/>
            <person name="Regev A."/>
            <person name="Nusbaum C."/>
        </authorList>
    </citation>
    <scope>IDENTIFICATION</scope>
</reference>
<reference key="3">
    <citation type="journal article" date="2011" name="Genetics">
        <title>Augmented annotation of the Schizosaccharomyces pombe genome reveals additional genes required for growth and viability.</title>
        <authorList>
            <person name="Bitton D.A."/>
            <person name="Wood V."/>
            <person name="Scutt P.J."/>
            <person name="Grallert A."/>
            <person name="Yates T."/>
            <person name="Smith D.L."/>
            <person name="Hagan I.M."/>
            <person name="Miller C.J."/>
        </authorList>
    </citation>
    <scope>IDENTIFICATION</scope>
    <scope>DISRUPTION PHENOTYPE</scope>
</reference>
<accession>G2TRS3</accession>
<name>KISH_SCHPO</name>
<protein>
    <recommendedName>
        <fullName>Protein kish</fullName>
    </recommendedName>
</protein>
<organism>
    <name type="scientific">Schizosaccharomyces pombe (strain 972 / ATCC 24843)</name>
    <name type="common">Fission yeast</name>
    <dbReference type="NCBI Taxonomy" id="284812"/>
    <lineage>
        <taxon>Eukaryota</taxon>
        <taxon>Fungi</taxon>
        <taxon>Dikarya</taxon>
        <taxon>Ascomycota</taxon>
        <taxon>Taphrinomycotina</taxon>
        <taxon>Schizosaccharomycetes</taxon>
        <taxon>Schizosaccharomycetales</taxon>
        <taxon>Schizosaccharomycetaceae</taxon>
        <taxon>Schizosaccharomyces</taxon>
    </lineage>
</organism>
<comment type="function">
    <text evidence="1">Involved in the early part of the secretory pathway.</text>
</comment>
<comment type="subcellular location">
    <subcellularLocation>
        <location evidence="1">Golgi apparatus membrane</location>
        <topology evidence="1">Single-pass type I membrane protein</topology>
    </subcellularLocation>
    <subcellularLocation>
        <location evidence="1">Endoplasmic reticulum membrane</location>
        <topology evidence="1">Single-pass type I membrane protein</topology>
    </subcellularLocation>
</comment>
<comment type="disruption phenotype">
    <text evidence="3">Inviable.</text>
</comment>
<comment type="similarity">
    <text evidence="4">Belongs to the KISH family.</text>
</comment>